<evidence type="ECO:0000255" key="1">
    <source>
        <dbReference type="HAMAP-Rule" id="MF_01356"/>
    </source>
</evidence>
<organism>
    <name type="scientific">Flavobacterium johnsoniae (strain ATCC 17061 / DSM 2064 / JCM 8514 / BCRC 14874 / CCUG 350202 / NBRC 14942 / NCIMB 11054 / UW101)</name>
    <name type="common">Cytophaga johnsonae</name>
    <dbReference type="NCBI Taxonomy" id="376686"/>
    <lineage>
        <taxon>Bacteria</taxon>
        <taxon>Pseudomonadati</taxon>
        <taxon>Bacteroidota</taxon>
        <taxon>Flavobacteriia</taxon>
        <taxon>Flavobacteriales</taxon>
        <taxon>Flavobacteriaceae</taxon>
        <taxon>Flavobacterium</taxon>
    </lineage>
</organism>
<name>NUOB_FLAJ1</name>
<gene>
    <name evidence="1" type="primary">nuoB</name>
    <name type="ordered locus">Fjoh_1245</name>
</gene>
<sequence>MSDSKVNMVSPPEGLTGEGFFATKLNDVVGLARANSLWPLPFATSCCGIEFMATMAAHYDLARFGSERVSFSPRQADMLLVMGTISKKMAPILRQVYEQMSEPRWVIAVGACASSGGVFDTYSVLQGIDKVIPVDVYVPGCPPRPEQIVDGVMRLQELVKSESVRRRSSPEYQELLASYNIS</sequence>
<comment type="function">
    <text evidence="1">NDH-1 shuttles electrons from NADH, via FMN and iron-sulfur (Fe-S) centers, to quinones in the respiratory chain. The immediate electron acceptor for the enzyme in this species is believed to be a menaquinone. Couples the redox reaction to proton translocation (for every two electrons transferred, four hydrogen ions are translocated across the cytoplasmic membrane), and thus conserves the redox energy in a proton gradient.</text>
</comment>
<comment type="catalytic activity">
    <reaction evidence="1">
        <text>a quinone + NADH + 5 H(+)(in) = a quinol + NAD(+) + 4 H(+)(out)</text>
        <dbReference type="Rhea" id="RHEA:57888"/>
        <dbReference type="ChEBI" id="CHEBI:15378"/>
        <dbReference type="ChEBI" id="CHEBI:24646"/>
        <dbReference type="ChEBI" id="CHEBI:57540"/>
        <dbReference type="ChEBI" id="CHEBI:57945"/>
        <dbReference type="ChEBI" id="CHEBI:132124"/>
    </reaction>
</comment>
<comment type="cofactor">
    <cofactor evidence="1">
        <name>[4Fe-4S] cluster</name>
        <dbReference type="ChEBI" id="CHEBI:49883"/>
    </cofactor>
    <text evidence="1">Binds 1 [4Fe-4S] cluster.</text>
</comment>
<comment type="subunit">
    <text evidence="1">NDH-1 is composed of 14 different subunits. Subunits NuoB, C, D, E, F, and G constitute the peripheral sector of the complex.</text>
</comment>
<comment type="subcellular location">
    <subcellularLocation>
        <location evidence="1">Cell inner membrane</location>
        <topology evidence="1">Peripheral membrane protein</topology>
        <orientation evidence="1">Cytoplasmic side</orientation>
    </subcellularLocation>
</comment>
<comment type="similarity">
    <text evidence="1">Belongs to the complex I 20 kDa subunit family.</text>
</comment>
<keyword id="KW-0004">4Fe-4S</keyword>
<keyword id="KW-0997">Cell inner membrane</keyword>
<keyword id="KW-1003">Cell membrane</keyword>
<keyword id="KW-0408">Iron</keyword>
<keyword id="KW-0411">Iron-sulfur</keyword>
<keyword id="KW-0472">Membrane</keyword>
<keyword id="KW-0479">Metal-binding</keyword>
<keyword id="KW-0520">NAD</keyword>
<keyword id="KW-0874">Quinone</keyword>
<keyword id="KW-1278">Translocase</keyword>
<keyword id="KW-0813">Transport</keyword>
<accession>A5FKI9</accession>
<reference key="1">
    <citation type="journal article" date="2009" name="Appl. Environ. Microbiol.">
        <title>Novel features of the polysaccharide-digesting gliding bacterium Flavobacterium johnsoniae as revealed by genome sequence analysis.</title>
        <authorList>
            <person name="McBride M.J."/>
            <person name="Xie G."/>
            <person name="Martens E.C."/>
            <person name="Lapidus A."/>
            <person name="Henrissat B."/>
            <person name="Rhodes R.G."/>
            <person name="Goltsman E."/>
            <person name="Wang W."/>
            <person name="Xu J."/>
            <person name="Hunnicutt D.W."/>
            <person name="Staroscik A.M."/>
            <person name="Hoover T.R."/>
            <person name="Cheng Y.Q."/>
            <person name="Stein J.L."/>
        </authorList>
    </citation>
    <scope>NUCLEOTIDE SEQUENCE [LARGE SCALE GENOMIC DNA]</scope>
    <source>
        <strain>ATCC 17061 / DSM 2064 / JCM 8514 / BCRC 14874 / CCUG 350202 / NBRC 14942 / NCIMB 11054 / UW101</strain>
    </source>
</reference>
<feature type="chain" id="PRO_0000376224" description="NADH-quinone oxidoreductase subunit B">
    <location>
        <begin position="1"/>
        <end position="182"/>
    </location>
</feature>
<feature type="binding site" evidence="1">
    <location>
        <position position="46"/>
    </location>
    <ligand>
        <name>[4Fe-4S] cluster</name>
        <dbReference type="ChEBI" id="CHEBI:49883"/>
    </ligand>
</feature>
<feature type="binding site" evidence="1">
    <location>
        <position position="47"/>
    </location>
    <ligand>
        <name>[4Fe-4S] cluster</name>
        <dbReference type="ChEBI" id="CHEBI:49883"/>
    </ligand>
</feature>
<feature type="binding site" evidence="1">
    <location>
        <position position="112"/>
    </location>
    <ligand>
        <name>[4Fe-4S] cluster</name>
        <dbReference type="ChEBI" id="CHEBI:49883"/>
    </ligand>
</feature>
<feature type="binding site" evidence="1">
    <location>
        <position position="141"/>
    </location>
    <ligand>
        <name>[4Fe-4S] cluster</name>
        <dbReference type="ChEBI" id="CHEBI:49883"/>
    </ligand>
</feature>
<protein>
    <recommendedName>
        <fullName evidence="1">NADH-quinone oxidoreductase subunit B</fullName>
        <ecNumber evidence="1">7.1.1.-</ecNumber>
    </recommendedName>
    <alternativeName>
        <fullName evidence="1">NADH dehydrogenase I subunit B</fullName>
    </alternativeName>
    <alternativeName>
        <fullName evidence="1">NDH-1 subunit B</fullName>
    </alternativeName>
</protein>
<dbReference type="EC" id="7.1.1.-" evidence="1"/>
<dbReference type="EMBL" id="CP000685">
    <property type="protein sequence ID" value="ABQ04277.1"/>
    <property type="molecule type" value="Genomic_DNA"/>
</dbReference>
<dbReference type="RefSeq" id="WP_012023327.1">
    <property type="nucleotide sequence ID" value="NZ_MUGZ01000003.1"/>
</dbReference>
<dbReference type="SMR" id="A5FKI9"/>
<dbReference type="STRING" id="376686.Fjoh_1245"/>
<dbReference type="KEGG" id="fjo:Fjoh_1245"/>
<dbReference type="eggNOG" id="COG0377">
    <property type="taxonomic scope" value="Bacteria"/>
</dbReference>
<dbReference type="HOGENOM" id="CLU_055737_7_3_10"/>
<dbReference type="OrthoDB" id="9786737at2"/>
<dbReference type="Proteomes" id="UP000006694">
    <property type="component" value="Chromosome"/>
</dbReference>
<dbReference type="GO" id="GO:0005886">
    <property type="term" value="C:plasma membrane"/>
    <property type="evidence" value="ECO:0007669"/>
    <property type="project" value="UniProtKB-SubCell"/>
</dbReference>
<dbReference type="GO" id="GO:0045271">
    <property type="term" value="C:respiratory chain complex I"/>
    <property type="evidence" value="ECO:0007669"/>
    <property type="project" value="TreeGrafter"/>
</dbReference>
<dbReference type="GO" id="GO:0051539">
    <property type="term" value="F:4 iron, 4 sulfur cluster binding"/>
    <property type="evidence" value="ECO:0007669"/>
    <property type="project" value="UniProtKB-KW"/>
</dbReference>
<dbReference type="GO" id="GO:0005506">
    <property type="term" value="F:iron ion binding"/>
    <property type="evidence" value="ECO:0007669"/>
    <property type="project" value="UniProtKB-UniRule"/>
</dbReference>
<dbReference type="GO" id="GO:0008137">
    <property type="term" value="F:NADH dehydrogenase (ubiquinone) activity"/>
    <property type="evidence" value="ECO:0007669"/>
    <property type="project" value="InterPro"/>
</dbReference>
<dbReference type="GO" id="GO:0050136">
    <property type="term" value="F:NADH:ubiquinone reductase (non-electrogenic) activity"/>
    <property type="evidence" value="ECO:0007669"/>
    <property type="project" value="UniProtKB-UniRule"/>
</dbReference>
<dbReference type="GO" id="GO:0048038">
    <property type="term" value="F:quinone binding"/>
    <property type="evidence" value="ECO:0007669"/>
    <property type="project" value="UniProtKB-KW"/>
</dbReference>
<dbReference type="GO" id="GO:0009060">
    <property type="term" value="P:aerobic respiration"/>
    <property type="evidence" value="ECO:0007669"/>
    <property type="project" value="TreeGrafter"/>
</dbReference>
<dbReference type="GO" id="GO:0015990">
    <property type="term" value="P:electron transport coupled proton transport"/>
    <property type="evidence" value="ECO:0007669"/>
    <property type="project" value="TreeGrafter"/>
</dbReference>
<dbReference type="FunFam" id="3.40.50.12280:FF:000002">
    <property type="entry name" value="NADH-quinone oxidoreductase subunit B"/>
    <property type="match status" value="1"/>
</dbReference>
<dbReference type="Gene3D" id="3.40.50.12280">
    <property type="match status" value="1"/>
</dbReference>
<dbReference type="HAMAP" id="MF_01356">
    <property type="entry name" value="NDH1_NuoB"/>
    <property type="match status" value="1"/>
</dbReference>
<dbReference type="InterPro" id="IPR006137">
    <property type="entry name" value="NADH_UbQ_OxRdtase-like_20kDa"/>
</dbReference>
<dbReference type="InterPro" id="IPR006138">
    <property type="entry name" value="NADH_UQ_OxRdtase_20Kd_su"/>
</dbReference>
<dbReference type="NCBIfam" id="TIGR01957">
    <property type="entry name" value="nuoB_fam"/>
    <property type="match status" value="1"/>
</dbReference>
<dbReference type="NCBIfam" id="NF005012">
    <property type="entry name" value="PRK06411.1"/>
    <property type="match status" value="1"/>
</dbReference>
<dbReference type="NCBIfam" id="NF011395">
    <property type="entry name" value="PRK14820.1"/>
    <property type="match status" value="1"/>
</dbReference>
<dbReference type="PANTHER" id="PTHR11995">
    <property type="entry name" value="NADH DEHYDROGENASE"/>
    <property type="match status" value="1"/>
</dbReference>
<dbReference type="PANTHER" id="PTHR11995:SF14">
    <property type="entry name" value="NADH DEHYDROGENASE [UBIQUINONE] IRON-SULFUR PROTEIN 7, MITOCHONDRIAL"/>
    <property type="match status" value="1"/>
</dbReference>
<dbReference type="Pfam" id="PF01058">
    <property type="entry name" value="Oxidored_q6"/>
    <property type="match status" value="1"/>
</dbReference>
<dbReference type="SUPFAM" id="SSF56770">
    <property type="entry name" value="HydA/Nqo6-like"/>
    <property type="match status" value="1"/>
</dbReference>
<dbReference type="PROSITE" id="PS01150">
    <property type="entry name" value="COMPLEX1_20K"/>
    <property type="match status" value="1"/>
</dbReference>
<proteinExistence type="inferred from homology"/>